<organismHost>
    <name type="scientific">Homo sapiens</name>
    <name type="common">Human</name>
    <dbReference type="NCBI Taxonomy" id="9606"/>
</organismHost>
<reference key="1">
    <citation type="journal article" date="1993" name="Virology">
        <title>The Epstein-Barr virus candidate vaccine antigen gp340/220 is highly conserved between virus types A and B.</title>
        <authorList>
            <person name="Lees J.F."/>
            <person name="Arrand J.E."/>
            <person name="Pepper S.V."/>
            <person name="Stewart J.P."/>
            <person name="Mackett M."/>
            <person name="Arrand J.R."/>
        </authorList>
    </citation>
    <scope>NUCLEOTIDE SEQUENCE [GENOMIC DNA]</scope>
</reference>
<reference key="2">
    <citation type="submission" date="1992-10" db="EMBL/GenBank/DDBJ databases">
        <authorList>
            <person name="Klein K."/>
            <person name="Mueller-Lantzsch N."/>
        </authorList>
    </citation>
    <scope>NUCLEOTIDE SEQUENCE [GENOMIC DNA]</scope>
</reference>
<organism>
    <name type="scientific">Epstein-Barr virus (strain P3HR-1)</name>
    <name type="common">HHV-4</name>
    <name type="synonym">Human herpesvirus 4</name>
    <dbReference type="NCBI Taxonomy" id="82829"/>
    <lineage>
        <taxon>Viruses</taxon>
        <taxon>Duplodnaviria</taxon>
        <taxon>Heunggongvirae</taxon>
        <taxon>Peploviricota</taxon>
        <taxon>Herviviricetes</taxon>
        <taxon>Herpesvirales</taxon>
        <taxon>Orthoherpesviridae</taxon>
        <taxon>Gammaherpesvirinae</taxon>
        <taxon>Lymphocryptovirus</taxon>
        <taxon>Lymphocryptovirus humangamma4</taxon>
        <taxon>Epstein-Barr virus (strain GD1)</taxon>
    </lineage>
</organism>
<accession>P68344</accession>
<accession>Q07284</accession>
<proteinExistence type="predicted"/>
<dbReference type="EMBL" id="L07922">
    <property type="protein sequence ID" value="AAA02783.1"/>
    <property type="molecule type" value="Genomic_DNA"/>
</dbReference>
<dbReference type="EMBL" id="X67776">
    <property type="protein sequence ID" value="CAA47986.1"/>
    <property type="molecule type" value="Genomic_DNA"/>
</dbReference>
<dbReference type="PIR" id="S29605">
    <property type="entry name" value="S29605"/>
</dbReference>
<dbReference type="SMR" id="P68344"/>
<dbReference type="DrugBank" id="DB00632">
    <property type="generic name" value="Docosanol"/>
</dbReference>
<dbReference type="GO" id="GO:0016020">
    <property type="term" value="C:membrane"/>
    <property type="evidence" value="ECO:0007669"/>
    <property type="project" value="UniProtKB-KW"/>
</dbReference>
<dbReference type="GO" id="GO:0055036">
    <property type="term" value="C:virion membrane"/>
    <property type="evidence" value="ECO:0007669"/>
    <property type="project" value="UniProtKB-SubCell"/>
</dbReference>
<dbReference type="Gene3D" id="2.60.40.2800">
    <property type="match status" value="1"/>
</dbReference>
<dbReference type="Gene3D" id="2.60.40.2810">
    <property type="match status" value="1"/>
</dbReference>
<dbReference type="Gene3D" id="2.60.40.2820">
    <property type="match status" value="1"/>
</dbReference>
<dbReference type="InterPro" id="IPR048692">
    <property type="entry name" value="GP350_C_dom_herpes"/>
</dbReference>
<dbReference type="InterPro" id="IPR048698">
    <property type="entry name" value="GP350_C_dom_herpes_sf"/>
</dbReference>
<dbReference type="InterPro" id="IPR007796">
    <property type="entry name" value="GP350_N_A_dom_herpes"/>
</dbReference>
<dbReference type="InterPro" id="IPR048700">
    <property type="entry name" value="GP350_N_A_dom_herpes_sf"/>
</dbReference>
<dbReference type="InterPro" id="IPR048689">
    <property type="entry name" value="GP350_N_B_dom_herpes"/>
</dbReference>
<dbReference type="Pfam" id="PF05109">
    <property type="entry name" value="Herpes_gp350_A"/>
    <property type="match status" value="1"/>
</dbReference>
<dbReference type="Pfam" id="PF20676">
    <property type="entry name" value="Herpes_gp350_B"/>
    <property type="match status" value="1"/>
</dbReference>
<dbReference type="Pfam" id="PF20677">
    <property type="entry name" value="Herpes_gp350_C"/>
    <property type="match status" value="1"/>
</dbReference>
<dbReference type="Pfam" id="PF20678">
    <property type="entry name" value="HV_Gp350_C-term"/>
    <property type="match status" value="1"/>
</dbReference>
<evidence type="ECO:0000255" key="1"/>
<evidence type="ECO:0000256" key="2">
    <source>
        <dbReference type="SAM" id="MobiDB-lite"/>
    </source>
</evidence>
<sequence length="886" mass="92389">MEAALLVCQYTIQSLIQLTRDDPGFFNVEILEFPFYPACNVCTADVNATINFDVGGKKHKLNLDFGLLTPHTKAVYQPRGAFGGSENATNLFLLELLGAGELALTMRSKKLPINITTGEEQQVSLESVDVYFQDVFGTMWCHHAEMQNPVYLIPETVPYIKWDNCNSTNITAVVRAQGLDVTLPLSLPTSAQDSNFSVKTEMLGNEIDIECIMEDGEISQVLPGDNKFNITCSGYESHVPSGGILTSTSPVATPIPGTGYAYSLRLTPRPVSRFLGNNSILYVFYSGNGPKASGGDYCIQSNIVFSDEIPASQDMPTNTTDITYVGDNATYSVPMVTSEDANSPNVTVTAFWAWPNNTETDFKCKWTLTSGTPSGCENISGAFASNRTFDITVSGLGTAPKTLIITRTATNATTTTHKVIFSKAPESTTTSPTLNTTGFAAPNTTTGLPSSTHVPTNLTAPASTGPTVSTADVTSPTPAGTTSGASPVTPSPSPRDNGTESKAPDMTSPTSAVTTPTPNATSPTPAVTTPTPNATSPTLGKTSPTSAVTTPTPNATSPTPAVTTPTPNATIPTLGKTSPTSAVTTPTPNATSPTVGETSPQANTTNHTLGGTSSTPVVTSPPKNATSAVTTGQHNITSSSTSSMSLRPSSISETLSPSTSDNSTSHMPLLTSAHPTGGENITQVTPASTSTHHVSTSSPAPRPGTTSQASGPGNSSTSTKPGEVNVTKGTPPKNATSPQAPSGQKTAVPTVTSTGGKANSTTGGKHTTGHGARTSTEPTTDYGGDSTTPRTRYNATTYLPPSTSSKLRPRWTFTSPPVTTAQATVPVPPTSQPRFSNLSMLVLQWASLAVLTLLLLLVMADCAFRRNLSTSHTYTTPPYDDAETYV</sequence>
<comment type="function">
    <text>Responsible for EBV binding to the CR2 receptor on human B-cells.</text>
</comment>
<comment type="subcellular location">
    <subcellularLocation>
        <location>Virion membrane</location>
    </subcellularLocation>
    <text>Most abundant component of the viral envelope.</text>
</comment>
<protein>
    <recommendedName>
        <fullName>Envelope glycoprotein GP340</fullName>
    </recommendedName>
    <alternativeName>
        <fullName>Membrane antigen</fullName>
        <shortName>MA</shortName>
    </alternativeName>
</protein>
<feature type="chain" id="PRO_0000116185" description="Envelope glycoprotein GP340">
    <location>
        <begin position="1"/>
        <end position="886"/>
    </location>
</feature>
<feature type="region of interest" description="Disordered" evidence="2">
    <location>
        <begin position="423"/>
        <end position="810"/>
    </location>
</feature>
<feature type="compositionally biased region" description="Low complexity" evidence="2">
    <location>
        <begin position="428"/>
        <end position="437"/>
    </location>
</feature>
<feature type="compositionally biased region" description="Polar residues" evidence="2">
    <location>
        <begin position="442"/>
        <end position="488"/>
    </location>
</feature>
<feature type="compositionally biased region" description="Low complexity" evidence="2">
    <location>
        <begin position="507"/>
        <end position="595"/>
    </location>
</feature>
<feature type="compositionally biased region" description="Polar residues" evidence="2">
    <location>
        <begin position="596"/>
        <end position="637"/>
    </location>
</feature>
<feature type="compositionally biased region" description="Low complexity" evidence="2">
    <location>
        <begin position="638"/>
        <end position="660"/>
    </location>
</feature>
<feature type="compositionally biased region" description="Low complexity" evidence="2">
    <location>
        <begin position="684"/>
        <end position="699"/>
    </location>
</feature>
<feature type="compositionally biased region" description="Polar residues" evidence="2">
    <location>
        <begin position="704"/>
        <end position="720"/>
    </location>
</feature>
<feature type="compositionally biased region" description="Polar residues" evidence="2">
    <location>
        <begin position="733"/>
        <end position="760"/>
    </location>
</feature>
<feature type="compositionally biased region" description="Low complexity" evidence="2">
    <location>
        <begin position="761"/>
        <end position="771"/>
    </location>
</feature>
<feature type="compositionally biased region" description="Polar residues" evidence="2">
    <location>
        <begin position="773"/>
        <end position="806"/>
    </location>
</feature>
<feature type="glycosylation site" description="N-linked (GlcNAc...) asparagine; by host" evidence="1">
    <location>
        <position position="47"/>
    </location>
</feature>
<feature type="glycosylation site" description="N-linked (GlcNAc...) asparagine; by host" evidence="1">
    <location>
        <position position="87"/>
    </location>
</feature>
<feature type="glycosylation site" description="N-linked (GlcNAc...) asparagine; by host" evidence="1">
    <location>
        <position position="114"/>
    </location>
</feature>
<feature type="glycosylation site" description="N-linked (GlcNAc...) asparagine; by host" evidence="1">
    <location>
        <position position="166"/>
    </location>
</feature>
<feature type="glycosylation site" description="N-linked (GlcNAc...) asparagine; by host" evidence="1">
    <location>
        <position position="169"/>
    </location>
</feature>
<feature type="glycosylation site" description="N-linked (GlcNAc...) asparagine; by host" evidence="1">
    <location>
        <position position="195"/>
    </location>
</feature>
<feature type="glycosylation site" description="N-linked (GlcNAc...) asparagine; by host" evidence="1">
    <location>
        <position position="229"/>
    </location>
</feature>
<feature type="glycosylation site" description="N-linked (GlcNAc...) asparagine; by host" evidence="1">
    <location>
        <position position="277"/>
    </location>
</feature>
<feature type="glycosylation site" description="N-linked (GlcNAc...) asparagine; by host" evidence="1">
    <location>
        <position position="318"/>
    </location>
</feature>
<feature type="glycosylation site" description="N-linked (GlcNAc...) asparagine; by host" evidence="1">
    <location>
        <position position="328"/>
    </location>
</feature>
<feature type="glycosylation site" description="N-linked (GlcNAc...) asparagine; by host" evidence="1">
    <location>
        <position position="345"/>
    </location>
</feature>
<feature type="glycosylation site" description="N-linked (GlcNAc...) asparagine; by host" evidence="1">
    <location>
        <position position="356"/>
    </location>
</feature>
<feature type="glycosylation site" description="N-linked (GlcNAc...) asparagine; by host" evidence="1">
    <location>
        <position position="378"/>
    </location>
</feature>
<feature type="glycosylation site" description="N-linked (GlcNAc...) asparagine; by host" evidence="1">
    <location>
        <position position="386"/>
    </location>
</feature>
<feature type="glycosylation site" description="N-linked (GlcNAc...) asparagine; by host" evidence="1">
    <location>
        <position position="411"/>
    </location>
</feature>
<feature type="glycosylation site" description="N-linked (GlcNAc...) asparagine; by host" evidence="1">
    <location>
        <position position="435"/>
    </location>
</feature>
<feature type="glycosylation site" description="N-linked (GlcNAc...) asparagine; by host" evidence="1">
    <location>
        <position position="443"/>
    </location>
</feature>
<feature type="glycosylation site" description="N-linked (GlcNAc...) asparagine; by host" evidence="1">
    <location>
        <position position="457"/>
    </location>
</feature>
<feature type="glycosylation site" description="N-linked (GlcNAc...) asparagine; by host" evidence="1">
    <location>
        <position position="497"/>
    </location>
</feature>
<feature type="glycosylation site" description="N-linked (GlcNAc...) asparagine; by host" evidence="1">
    <location>
        <position position="519"/>
    </location>
</feature>
<feature type="glycosylation site" description="N-linked (GlcNAc...) asparagine; by host" evidence="1">
    <location>
        <position position="533"/>
    </location>
</feature>
<feature type="glycosylation site" description="N-linked (GlcNAc...) asparagine; by host" evidence="1">
    <location>
        <position position="568"/>
    </location>
</feature>
<feature type="glycosylation site" description="N-linked (GlcNAc...) asparagine; by host" evidence="1">
    <location>
        <position position="589"/>
    </location>
</feature>
<feature type="glycosylation site" description="N-linked (GlcNAc...) asparagine; by host" evidence="1">
    <location>
        <position position="624"/>
    </location>
</feature>
<feature type="glycosylation site" description="N-linked (GlcNAc...) asparagine; by host" evidence="1">
    <location>
        <position position="680"/>
    </location>
</feature>
<gene>
    <name type="ORF">BLLF1</name>
</gene>
<name>VGP3_EBVP3</name>
<keyword id="KW-0325">Glycoprotein</keyword>
<keyword id="KW-0426">Late protein</keyword>
<keyword id="KW-0472">Membrane</keyword>
<keyword id="KW-0946">Virion</keyword>